<proteinExistence type="evidence at protein level"/>
<keyword id="KW-0085">Behavior</keyword>
<keyword id="KW-1003">Cell membrane</keyword>
<keyword id="KW-1015">Disulfide bond</keyword>
<keyword id="KW-0297">G-protein coupled receptor</keyword>
<keyword id="KW-0325">Glycoprotein</keyword>
<keyword id="KW-0449">Lipoprotein</keyword>
<keyword id="KW-0472">Membrane</keyword>
<keyword id="KW-0564">Palmitate</keyword>
<keyword id="KW-0675">Receptor</keyword>
<keyword id="KW-1185">Reference proteome</keyword>
<keyword id="KW-0770">Synapse</keyword>
<keyword id="KW-0771">Synaptosome</keyword>
<keyword id="KW-0807">Transducer</keyword>
<keyword id="KW-0812">Transmembrane</keyword>
<keyword id="KW-1133">Transmembrane helix</keyword>
<sequence>MASSYKMSEQSTTSEHILQKTCDHLILTNRSGLETDSVAEEMKQTVEGQGHTVHWAALLILAVIIPTIGGNILVILAVALEKRLQYATNYFLMSLAIADLLVGLFVMPIALLTIMFEAIWPLPLALCPAWLFLDVLFSTASIMHLCAISLDRYIAIKKPIQANQCNSRATAFIKITVVWLISIGIAIPVPIKGIETDVINPHNVTCELTKDRFGSFMVFGSLAAFFAPLTIMVVTYFLTIHTLQKKAYLVKNKPPQRLTRWTVPTVFLREDSSFSSPEKVAMLDGSHRDKILPNSSDETLMRRMSSVGKRSAQTISNEQRASKALGVVFFLFLLMWCPFFITNLTLALCDSCNQTTLKTLLEIFVWIGYVSSGVNPLIYTLFNKTFREAFGRYITCNYRATKSVKALRKFSSTLCFGNSMVENSKFFTKHGIRNGINPAMYQSPMRLRSSTIQSSSIILLDTLLTENDGDKAEEQVSYI</sequence>
<gene>
    <name type="primary">Htr2b</name>
</gene>
<organism>
    <name type="scientific">Mus musculus</name>
    <name type="common">Mouse</name>
    <dbReference type="NCBI Taxonomy" id="10090"/>
    <lineage>
        <taxon>Eukaryota</taxon>
        <taxon>Metazoa</taxon>
        <taxon>Chordata</taxon>
        <taxon>Craniata</taxon>
        <taxon>Vertebrata</taxon>
        <taxon>Euteleostomi</taxon>
        <taxon>Mammalia</taxon>
        <taxon>Eutheria</taxon>
        <taxon>Euarchontoglires</taxon>
        <taxon>Glires</taxon>
        <taxon>Rodentia</taxon>
        <taxon>Myomorpha</taxon>
        <taxon>Muroidea</taxon>
        <taxon>Muridae</taxon>
        <taxon>Murinae</taxon>
        <taxon>Mus</taxon>
        <taxon>Mus</taxon>
    </lineage>
</organism>
<protein>
    <recommendedName>
        <fullName>5-hydroxytryptamine receptor 2B</fullName>
        <shortName>5-HT-2B</shortName>
        <shortName>5-HT2B</shortName>
    </recommendedName>
    <alternativeName>
        <fullName>5-HT-2F</fullName>
    </alternativeName>
    <alternativeName>
        <fullName>NP75 protein</fullName>
    </alternativeName>
    <alternativeName>
        <fullName>Serotonin receptor 2B</fullName>
    </alternativeName>
</protein>
<name>5HT2B_MOUSE</name>
<feature type="chain" id="PRO_0000068954" description="5-hydroxytryptamine receptor 2B">
    <location>
        <begin position="1"/>
        <end position="479"/>
    </location>
</feature>
<feature type="topological domain" description="Extracellular" evidence="2">
    <location>
        <begin position="1"/>
        <end position="55"/>
    </location>
</feature>
<feature type="transmembrane region" description="Helical; Name=1" evidence="2">
    <location>
        <begin position="56"/>
        <end position="78"/>
    </location>
</feature>
<feature type="topological domain" description="Cytoplasmic" evidence="2">
    <location>
        <begin position="79"/>
        <end position="89"/>
    </location>
</feature>
<feature type="transmembrane region" description="Helical; Name=2" evidence="2">
    <location>
        <begin position="90"/>
        <end position="112"/>
    </location>
</feature>
<feature type="topological domain" description="Extracellular" evidence="1 2">
    <location>
        <begin position="113"/>
        <end position="128"/>
    </location>
</feature>
<feature type="transmembrane region" description="Helical; Name=3" evidence="2">
    <location>
        <begin position="129"/>
        <end position="150"/>
    </location>
</feature>
<feature type="topological domain" description="Cytoplasmic" evidence="2">
    <location>
        <begin position="151"/>
        <end position="170"/>
    </location>
</feature>
<feature type="transmembrane region" description="Helical; Name=4" evidence="2">
    <location>
        <begin position="171"/>
        <end position="191"/>
    </location>
</feature>
<feature type="topological domain" description="Extracellular" evidence="2">
    <location>
        <begin position="192"/>
        <end position="215"/>
    </location>
</feature>
<feature type="transmembrane region" description="Helical; Name=5" evidence="2">
    <location>
        <begin position="216"/>
        <end position="238"/>
    </location>
</feature>
<feature type="topological domain" description="Cytoplasmic" evidence="2">
    <location>
        <begin position="239"/>
        <end position="323"/>
    </location>
</feature>
<feature type="transmembrane region" description="Helical; Name=6" evidence="2">
    <location>
        <begin position="324"/>
        <end position="344"/>
    </location>
</feature>
<feature type="topological domain" description="Extracellular" evidence="2">
    <location>
        <begin position="345"/>
        <end position="359"/>
    </location>
</feature>
<feature type="transmembrane region" description="Helical; Name=7" evidence="2">
    <location>
        <begin position="360"/>
        <end position="381"/>
    </location>
</feature>
<feature type="topological domain" description="Cytoplasmic" evidence="2">
    <location>
        <begin position="382"/>
        <end position="479"/>
    </location>
</feature>
<feature type="short sequence motif" description="DRY motif; important for ligand-induced conformation changes" evidence="2">
    <location>
        <begin position="151"/>
        <end position="153"/>
    </location>
</feature>
<feature type="short sequence motif" description="[DE]RFG motif; may stabilize a conformation that preferentially activates signaling via beta-arrestin family members" evidence="2">
    <location>
        <begin position="211"/>
        <end position="214"/>
    </location>
</feature>
<feature type="short sequence motif" description="NPxxY motif; important for ligand-induced conformation changes and signaling" evidence="2">
    <location>
        <begin position="375"/>
        <end position="379"/>
    </location>
</feature>
<feature type="short sequence motif" description="PDZ-binding" evidence="2">
    <location>
        <begin position="477"/>
        <end position="479"/>
    </location>
</feature>
<feature type="binding site" evidence="2">
    <location>
        <position position="134"/>
    </location>
    <ligand>
        <name>ergotamine</name>
        <dbReference type="ChEBI" id="CHEBI:190463"/>
        <note>agonist</note>
    </ligand>
</feature>
<feature type="binding site" evidence="2">
    <location>
        <position position="139"/>
    </location>
    <ligand>
        <name>ergotamine</name>
        <dbReference type="ChEBI" id="CHEBI:190463"/>
        <note>agonist</note>
    </ligand>
</feature>
<feature type="binding site" evidence="2">
    <location>
        <position position="208"/>
    </location>
    <ligand>
        <name>ergotamine</name>
        <dbReference type="ChEBI" id="CHEBI:190463"/>
        <note>agonist</note>
    </ligand>
</feature>
<feature type="site" description="Hydrophobic barrier that decreases the speed of ligand binding and dissociation" evidence="2">
    <location>
        <position position="208"/>
    </location>
</feature>
<feature type="lipid moiety-binding region" description="S-palmitoyl cysteine" evidence="3">
    <location>
        <position position="396"/>
    </location>
</feature>
<feature type="glycosylation site" description="N-linked (GlcNAc...) asparagine" evidence="3">
    <location>
        <position position="29"/>
    </location>
</feature>
<feature type="disulfide bond" evidence="4">
    <location>
        <begin position="127"/>
        <end position="206"/>
    </location>
</feature>
<feature type="disulfide bond" evidence="4">
    <location>
        <begin position="349"/>
        <end position="352"/>
    </location>
</feature>
<feature type="sequence conflict" description="In Ref. 1; CAA78824." evidence="18" ref="1">
    <original>S</original>
    <variation>T</variation>
    <location>
        <position position="167"/>
    </location>
</feature>
<feature type="sequence conflict" description="In Ref. 1; CAA78824 and 2; CAA10051." evidence="18" ref="1 2">
    <original>A</original>
    <variation>V</variation>
    <location>
        <position position="227"/>
    </location>
</feature>
<feature type="sequence conflict" description="In Ref. 1; CAA78824." evidence="18" ref="1">
    <original>S</original>
    <variation>C</variation>
    <location>
        <position position="449"/>
    </location>
</feature>
<accession>Q02152</accession>
<accession>Q8JZK5</accession>
<accession>Q9QWS2</accession>
<dbReference type="EMBL" id="Z15119">
    <property type="protein sequence ID" value="CAA78824.1"/>
    <property type="status" value="ALT_SEQ"/>
    <property type="molecule type" value="mRNA"/>
</dbReference>
<dbReference type="EMBL" id="AJ012488">
    <property type="protein sequence ID" value="CAA10051.1"/>
    <property type="molecule type" value="Genomic_DNA"/>
</dbReference>
<dbReference type="EMBL" id="AF498254">
    <property type="protein sequence ID" value="AAM22971.1"/>
    <property type="molecule type" value="mRNA"/>
</dbReference>
<dbReference type="EMBL" id="AF498255">
    <property type="protein sequence ID" value="AAM22972.1"/>
    <property type="molecule type" value="mRNA"/>
</dbReference>
<dbReference type="EMBL" id="AK033713">
    <property type="protein sequence ID" value="BAC28441.1"/>
    <property type="molecule type" value="mRNA"/>
</dbReference>
<dbReference type="EMBL" id="BC023690">
    <property type="protein sequence ID" value="AAH23690.1"/>
    <property type="molecule type" value="mRNA"/>
</dbReference>
<dbReference type="CCDS" id="CCDS35644.1"/>
<dbReference type="PIR" id="S27269">
    <property type="entry name" value="S27269"/>
</dbReference>
<dbReference type="RefSeq" id="NP_032337.2">
    <property type="nucleotide sequence ID" value="NM_008311.3"/>
</dbReference>
<dbReference type="RefSeq" id="XP_006529210.1">
    <property type="nucleotide sequence ID" value="XM_006529147.2"/>
</dbReference>
<dbReference type="SMR" id="Q02152"/>
<dbReference type="CORUM" id="Q02152"/>
<dbReference type="FunCoup" id="Q02152">
    <property type="interactions" value="693"/>
</dbReference>
<dbReference type="STRING" id="10090.ENSMUSP00000027431"/>
<dbReference type="BindingDB" id="Q02152"/>
<dbReference type="ChEMBL" id="CHEMBL2583"/>
<dbReference type="DrugCentral" id="Q02152"/>
<dbReference type="GlyCosmos" id="Q02152">
    <property type="glycosylation" value="1 site, No reported glycans"/>
</dbReference>
<dbReference type="GlyGen" id="Q02152">
    <property type="glycosylation" value="1 site"/>
</dbReference>
<dbReference type="iPTMnet" id="Q02152"/>
<dbReference type="PhosphoSitePlus" id="Q02152"/>
<dbReference type="PaxDb" id="10090-ENSMUSP00000027431"/>
<dbReference type="Antibodypedia" id="2921">
    <property type="antibodies" value="398 antibodies from 33 providers"/>
</dbReference>
<dbReference type="DNASU" id="15559"/>
<dbReference type="Ensembl" id="ENSMUST00000027431.7">
    <property type="protein sequence ID" value="ENSMUSP00000027431.7"/>
    <property type="gene ID" value="ENSMUSG00000026228.7"/>
</dbReference>
<dbReference type="GeneID" id="15559"/>
<dbReference type="KEGG" id="mmu:15559"/>
<dbReference type="UCSC" id="uc007buz.1">
    <property type="organism name" value="mouse"/>
</dbReference>
<dbReference type="AGR" id="MGI:109323"/>
<dbReference type="CTD" id="3357"/>
<dbReference type="MGI" id="MGI:109323">
    <property type="gene designation" value="Htr2b"/>
</dbReference>
<dbReference type="VEuPathDB" id="HostDB:ENSMUSG00000026228"/>
<dbReference type="eggNOG" id="KOG3656">
    <property type="taxonomic scope" value="Eukaryota"/>
</dbReference>
<dbReference type="GeneTree" id="ENSGT01050000244937"/>
<dbReference type="HOGENOM" id="CLU_009579_11_3_1"/>
<dbReference type="InParanoid" id="Q02152"/>
<dbReference type="OMA" id="HLIFANW"/>
<dbReference type="OrthoDB" id="8710314at2759"/>
<dbReference type="PhylomeDB" id="Q02152"/>
<dbReference type="TreeFam" id="TF316350"/>
<dbReference type="Reactome" id="R-MMU-390666">
    <property type="pathway name" value="Serotonin receptors"/>
</dbReference>
<dbReference type="Reactome" id="R-MMU-416476">
    <property type="pathway name" value="G alpha (q) signalling events"/>
</dbReference>
<dbReference type="BioGRID-ORCS" id="15559">
    <property type="hits" value="0 hits in 62 CRISPR screens"/>
</dbReference>
<dbReference type="PRO" id="PR:Q02152"/>
<dbReference type="Proteomes" id="UP000000589">
    <property type="component" value="Chromosome 1"/>
</dbReference>
<dbReference type="RNAct" id="Q02152">
    <property type="molecule type" value="protein"/>
</dbReference>
<dbReference type="Bgee" id="ENSMUSG00000026228">
    <property type="expression patterns" value="Expressed in decidua and 69 other cell types or tissues"/>
</dbReference>
<dbReference type="ExpressionAtlas" id="Q02152">
    <property type="expression patterns" value="baseline and differential"/>
</dbReference>
<dbReference type="GO" id="GO:0005737">
    <property type="term" value="C:cytoplasm"/>
    <property type="evidence" value="ECO:0000314"/>
    <property type="project" value="UniProtKB"/>
</dbReference>
<dbReference type="GO" id="GO:0098666">
    <property type="term" value="C:G protein-coupled serotonin receptor complex"/>
    <property type="evidence" value="ECO:0000314"/>
    <property type="project" value="UniProtKB"/>
</dbReference>
<dbReference type="GO" id="GO:0043005">
    <property type="term" value="C:neuron projection"/>
    <property type="evidence" value="ECO:0007669"/>
    <property type="project" value="UniProtKB-KW"/>
</dbReference>
<dbReference type="GO" id="GO:0005654">
    <property type="term" value="C:nucleoplasm"/>
    <property type="evidence" value="ECO:0007669"/>
    <property type="project" value="Ensembl"/>
</dbReference>
<dbReference type="GO" id="GO:0005886">
    <property type="term" value="C:plasma membrane"/>
    <property type="evidence" value="ECO:0000314"/>
    <property type="project" value="UniProtKB"/>
</dbReference>
<dbReference type="GO" id="GO:0045202">
    <property type="term" value="C:synapse"/>
    <property type="evidence" value="ECO:0007669"/>
    <property type="project" value="UniProtKB-SubCell"/>
</dbReference>
<dbReference type="GO" id="GO:0004993">
    <property type="term" value="F:G protein-coupled serotonin receptor activity"/>
    <property type="evidence" value="ECO:0000314"/>
    <property type="project" value="UniProtKB"/>
</dbReference>
<dbReference type="GO" id="GO:0001965">
    <property type="term" value="F:G-protein alpha-subunit binding"/>
    <property type="evidence" value="ECO:0000250"/>
    <property type="project" value="UniProtKB"/>
</dbReference>
<dbReference type="GO" id="GO:0001587">
    <property type="term" value="F:Gq/11-coupled serotonin receptor activity"/>
    <property type="evidence" value="ECO:0007669"/>
    <property type="project" value="Ensembl"/>
</dbReference>
<dbReference type="GO" id="GO:0005096">
    <property type="term" value="F:GTPase activator activity"/>
    <property type="evidence" value="ECO:0000315"/>
    <property type="project" value="UniProtKB"/>
</dbReference>
<dbReference type="GO" id="GO:0051378">
    <property type="term" value="F:serotonin binding"/>
    <property type="evidence" value="ECO:0000314"/>
    <property type="project" value="UniProtKB"/>
</dbReference>
<dbReference type="GO" id="GO:0099589">
    <property type="term" value="F:serotonin receptor activity"/>
    <property type="evidence" value="ECO:0007669"/>
    <property type="project" value="Ensembl"/>
</dbReference>
<dbReference type="GO" id="GO:0019722">
    <property type="term" value="P:calcium-mediated signaling"/>
    <property type="evidence" value="ECO:0000250"/>
    <property type="project" value="UniProtKB"/>
</dbReference>
<dbReference type="GO" id="GO:0003300">
    <property type="term" value="P:cardiac muscle hypertrophy"/>
    <property type="evidence" value="ECO:0000315"/>
    <property type="project" value="UniProtKB"/>
</dbReference>
<dbReference type="GO" id="GO:0019934">
    <property type="term" value="P:cGMP-mediated signaling"/>
    <property type="evidence" value="ECO:0000250"/>
    <property type="project" value="UniProtKB"/>
</dbReference>
<dbReference type="GO" id="GO:0048598">
    <property type="term" value="P:embryonic morphogenesis"/>
    <property type="evidence" value="ECO:0000315"/>
    <property type="project" value="UniProtKB"/>
</dbReference>
<dbReference type="GO" id="GO:0070371">
    <property type="term" value="P:ERK1 and ERK2 cascade"/>
    <property type="evidence" value="ECO:0000315"/>
    <property type="project" value="UniProtKB"/>
</dbReference>
<dbReference type="GO" id="GO:0007186">
    <property type="term" value="P:G protein-coupled receptor signaling pathway"/>
    <property type="evidence" value="ECO:0000250"/>
    <property type="project" value="UniProtKB"/>
</dbReference>
<dbReference type="GO" id="GO:0098664">
    <property type="term" value="P:G protein-coupled serotonin receptor signaling pathway"/>
    <property type="evidence" value="ECO:0000250"/>
    <property type="project" value="UniProtKB"/>
</dbReference>
<dbReference type="GO" id="GO:0007507">
    <property type="term" value="P:heart development"/>
    <property type="evidence" value="ECO:0000315"/>
    <property type="project" value="MGI"/>
</dbReference>
<dbReference type="GO" id="GO:0003007">
    <property type="term" value="P:heart morphogenesis"/>
    <property type="evidence" value="ECO:0000315"/>
    <property type="project" value="UniProtKB"/>
</dbReference>
<dbReference type="GO" id="GO:0014827">
    <property type="term" value="P:intestine smooth muscle contraction"/>
    <property type="evidence" value="ECO:0000250"/>
    <property type="project" value="UniProtKB"/>
</dbReference>
<dbReference type="GO" id="GO:0006874">
    <property type="term" value="P:intracellular calcium ion homeostasis"/>
    <property type="evidence" value="ECO:0007669"/>
    <property type="project" value="Ensembl"/>
</dbReference>
<dbReference type="GO" id="GO:0043066">
    <property type="term" value="P:negative regulation of apoptotic process"/>
    <property type="evidence" value="ECO:0000315"/>
    <property type="project" value="UniProtKB"/>
</dbReference>
<dbReference type="GO" id="GO:0014033">
    <property type="term" value="P:neural crest cell differentiation"/>
    <property type="evidence" value="ECO:0000315"/>
    <property type="project" value="UniProtKB"/>
</dbReference>
<dbReference type="GO" id="GO:0001755">
    <property type="term" value="P:neural crest cell migration"/>
    <property type="evidence" value="ECO:0000315"/>
    <property type="project" value="UniProtKB"/>
</dbReference>
<dbReference type="GO" id="GO:0007208">
    <property type="term" value="P:phospholipase C-activating serotonin receptor signaling pathway"/>
    <property type="evidence" value="ECO:0000315"/>
    <property type="project" value="UniProtKB"/>
</dbReference>
<dbReference type="GO" id="GO:0043123">
    <property type="term" value="P:positive regulation of canonical NF-kappaB signal transduction"/>
    <property type="evidence" value="ECO:0000250"/>
    <property type="project" value="UniProtKB"/>
</dbReference>
<dbReference type="GO" id="GO:0051781">
    <property type="term" value="P:positive regulation of cell division"/>
    <property type="evidence" value="ECO:0000315"/>
    <property type="project" value="UniProtKB"/>
</dbReference>
<dbReference type="GO" id="GO:0008284">
    <property type="term" value="P:positive regulation of cell population proliferation"/>
    <property type="evidence" value="ECO:0000250"/>
    <property type="project" value="UniProtKB"/>
</dbReference>
<dbReference type="GO" id="GO:0001819">
    <property type="term" value="P:positive regulation of cytokine production"/>
    <property type="evidence" value="ECO:0000315"/>
    <property type="project" value="UniProtKB"/>
</dbReference>
<dbReference type="GO" id="GO:0001938">
    <property type="term" value="P:positive regulation of endothelial cell proliferation"/>
    <property type="evidence" value="ECO:0000315"/>
    <property type="project" value="UniProtKB"/>
</dbReference>
<dbReference type="GO" id="GO:0070374">
    <property type="term" value="P:positive regulation of ERK1 and ERK2 cascade"/>
    <property type="evidence" value="ECO:0007669"/>
    <property type="project" value="Ensembl"/>
</dbReference>
<dbReference type="GO" id="GO:0010513">
    <property type="term" value="P:positive regulation of phosphatidylinositol biosynthetic process"/>
    <property type="evidence" value="ECO:0000250"/>
    <property type="project" value="UniProtKB"/>
</dbReference>
<dbReference type="GO" id="GO:0050795">
    <property type="term" value="P:regulation of behavior"/>
    <property type="evidence" value="ECO:0000315"/>
    <property type="project" value="UniProtKB"/>
</dbReference>
<dbReference type="GO" id="GO:0051209">
    <property type="term" value="P:release of sequestered calcium ion into cytosol"/>
    <property type="evidence" value="ECO:0000250"/>
    <property type="project" value="UniProtKB"/>
</dbReference>
<dbReference type="GO" id="GO:0009410">
    <property type="term" value="P:response to xenobiotic stimulus"/>
    <property type="evidence" value="ECO:0007669"/>
    <property type="project" value="Ensembl"/>
</dbReference>
<dbReference type="GO" id="GO:0042310">
    <property type="term" value="P:vasoconstriction"/>
    <property type="evidence" value="ECO:0000250"/>
    <property type="project" value="UniProtKB"/>
</dbReference>
<dbReference type="FunFam" id="1.20.1070.10:FF:000523">
    <property type="entry name" value="5-hydroxytryptamine receptor 2B"/>
    <property type="match status" value="2"/>
</dbReference>
<dbReference type="Gene3D" id="1.20.1070.10">
    <property type="entry name" value="Rhodopsin 7-helix transmembrane proteins"/>
    <property type="match status" value="1"/>
</dbReference>
<dbReference type="InterPro" id="IPR000482">
    <property type="entry name" value="5HT2B_rcpt"/>
</dbReference>
<dbReference type="InterPro" id="IPR002231">
    <property type="entry name" value="5HT_rcpt"/>
</dbReference>
<dbReference type="InterPro" id="IPR000276">
    <property type="entry name" value="GPCR_Rhodpsn"/>
</dbReference>
<dbReference type="InterPro" id="IPR017452">
    <property type="entry name" value="GPCR_Rhodpsn_7TM"/>
</dbReference>
<dbReference type="PANTHER" id="PTHR24247">
    <property type="entry name" value="5-HYDROXYTRYPTAMINE RECEPTOR"/>
    <property type="match status" value="1"/>
</dbReference>
<dbReference type="PANTHER" id="PTHR24247:SF31">
    <property type="entry name" value="5-HYDROXYTRYPTAMINE RECEPTOR 2B"/>
    <property type="match status" value="1"/>
</dbReference>
<dbReference type="Pfam" id="PF00001">
    <property type="entry name" value="7tm_1"/>
    <property type="match status" value="1"/>
</dbReference>
<dbReference type="PRINTS" id="PR00651">
    <property type="entry name" value="5HT2BRECEPTR"/>
</dbReference>
<dbReference type="PRINTS" id="PR01101">
    <property type="entry name" value="5HTRECEPTOR"/>
</dbReference>
<dbReference type="PRINTS" id="PR00237">
    <property type="entry name" value="GPCRRHODOPSN"/>
</dbReference>
<dbReference type="SMART" id="SM01381">
    <property type="entry name" value="7TM_GPCR_Srsx"/>
    <property type="match status" value="1"/>
</dbReference>
<dbReference type="SUPFAM" id="SSF81321">
    <property type="entry name" value="Family A G protein-coupled receptor-like"/>
    <property type="match status" value="1"/>
</dbReference>
<dbReference type="PROSITE" id="PS00237">
    <property type="entry name" value="G_PROTEIN_RECEP_F1_1"/>
    <property type="match status" value="1"/>
</dbReference>
<dbReference type="PROSITE" id="PS50262">
    <property type="entry name" value="G_PROTEIN_RECEP_F1_2"/>
    <property type="match status" value="1"/>
</dbReference>
<comment type="function">
    <text evidence="2 5 6 7 8 9 10 11 12 13 14 15 16 17">G-protein coupled receptor for 5-hydroxytryptamine (serotonin) (PubMed:1426253, PubMed:17325130). Also functions as a receptor for various ergot alkaloid derivatives and psychoactive substances (PubMed:1426253, PubMed:16940156). Ligand binding causes a conformation change that triggers signaling via guanine nucleotide-binding proteins (G proteins) and modulates the activity of downstream effectors (By similarity). HTR2B is coupled to G(q)/G(11) G alpha proteins and activates phospholipase C-beta, releasing diacylglycerol (DAG) and inositol 1,4,5-trisphosphate (IP3) second messengers that modulate the activity of phosphatidylinositol 3-kinase and promote the release of Ca(2+) ions from intracellular stores, respectively (By similarity). Beta-arrestin family members inhibit signaling via G proteins and mediate activation of alternative signaling pathways (By similarity). Plays a role in the regulation of dopamine and 5-hydroxytryptamine release, 5-hydroxytryptamine uptake and in the regulation of extracellular dopamine and 5-hydroxytryptamine levels, and thereby affects neural activity (PubMed:16940156, PubMed:18337424). May play a role in the perception of pain (PubMed:21273425). Plays a role in the regulation of behavior, including impulsive behavior (PubMed:21179162). Required for normal proliferation of embryonic cardiac myocytes and normal heart development (PubMed:10944220, PubMed:11413089). Protects cardiomyocytes against apoptosis (PubMed:12738797). Plays a role in the adaptation of pulmonary arteries to chronic hypoxia (PubMed:12244304). Plays a role in vasoconstriction (PubMed:12244304, PubMed:23346101). Required for normal osteoblast function and proliferation, and for maintaining normal bone density (PubMed:17846081). Required for normal proliferation of the interstitial cells of Cajal in the intestine (PubMed:19941613).</text>
</comment>
<comment type="subunit">
    <text evidence="2">Interacts (via C-terminus) with MPDZ.</text>
</comment>
<comment type="subcellular location">
    <subcellularLocation>
        <location evidence="9 11">Cell membrane</location>
        <topology evidence="2">Multi-pass membrane protein</topology>
    </subcellularLocation>
    <subcellularLocation>
        <location evidence="13">Synapse</location>
        <location evidence="13">Synaptosome</location>
    </subcellularLocation>
</comment>
<comment type="tissue specificity">
    <text evidence="5 9 12 13 14 16">Ubiquitous. Detected in intestine, heart, skeletal muscle, testis, urinary bladder, stomach, liver, lung, brain and kidney. Detected in osteoblasts. Detected in the raphe nucleus in the brain, in dorsal root ganglion neurons, the brain stem, cerebellum and spinal cord. Detected in interstitial cells of Cajal in the small intestine.</text>
</comment>
<comment type="domain">
    <text evidence="2">Ligands are bound in a hydrophobic pocket formed by the transmembrane helices.</text>
</comment>
<comment type="disruption phenotype">
    <text evidence="5 6 7 8 12 13 14">Partial embryonic and perinatal lethality, due to heart ventricle hypoplasia and impaired proliferative capacity of heart myocytes. Mutant mice that survive into adulthood have a decreased heart weight relative to body weight. They display dilated cardiomyopathy with a loss of ventricular mass, due to a reduction in the number and size of cardiomyocytes. The myocardium from mutant mice displays abnormal organization of the contractile elements, with an irregular array of sarcomeric myofibrils and abnormally wide Z bands. In addition, heart muscle mitochondria display structural and functional defects. Mutant mice do not respond to chronic exposure to low oxygen levels by remodeling of their lung arteries, unlike wild-type mice, and as a consequence, do not develop increased right ventricular systolic pressure in response to chronic hypoxia. Adult mutant female mice display reduced bone density that worsens with age. Osteopenia is due to reduced proliferation and delayed differentiation of osteoblasts and reduced calcium incorporation by osteoblasts (PubMed:17846081). In addition, mutant mice display a reduced number of proliferating interstitial cells of Cajal in the myenteric plexus in jejunum muscle, and a reduced number of interstitial cells of Cajal in the deep muscular plexus (PubMed:19941613). Mutant mice also show increased locomotor activity in a novel environment, compared to the wild-type. Unlike the wild-type, they do not respond to the drug 3,4-methylenedioxymethamphetamine with increased locomotion and increased 5-hydroxytryptamine and dopamine levels in the brain (PubMed:18337424).</text>
</comment>
<comment type="similarity">
    <text evidence="4">Belongs to the G-protein coupled receptor 1 family.</text>
</comment>
<comment type="sequence caution" evidence="18">
    <conflict type="erroneous termination">
        <sequence resource="EMBL-CDS" id="CAA78824"/>
    </conflict>
    <text>Extended C-terminus.</text>
</comment>
<reference key="1">
    <citation type="journal article" date="1992" name="FEBS Lett.">
        <title>New mouse 5-HT2-like receptor. Expression in brain, heart and intestine.</title>
        <authorList>
            <person name="Loric S."/>
            <person name="Launay J.-M."/>
            <person name="Colas J.-F."/>
            <person name="Maroteaux L."/>
        </authorList>
    </citation>
    <scope>NUCLEOTIDE SEQUENCE [MRNA]</scope>
    <scope>FUNCTION</scope>
    <scope>SUBCELLULAR LOCATION</scope>
    <scope>TISSUE SPECIFICITY</scope>
    <source>
        <tissue>Brain</tissue>
    </source>
</reference>
<reference key="2">
    <citation type="submission" date="1998-11" db="EMBL/GenBank/DDBJ databases">
        <title>Genomic sequence of the 5-HT2B receptor locus.</title>
        <authorList>
            <person name="Choi D.S."/>
            <person name="Maroteaux L."/>
        </authorList>
    </citation>
    <scope>NUCLEOTIDE SEQUENCE [GENOMIC DNA]</scope>
    <source>
        <strain>129/Sv</strain>
    </source>
</reference>
<reference key="3">
    <citation type="journal article" date="2001" name="Mamm. Genome">
        <title>High-throughput sequence identification of gene coding variants within alcohol-related QTLs.</title>
        <authorList>
            <person name="Ehringer M.A."/>
            <person name="Thompson J."/>
            <person name="Conroy O."/>
            <person name="Xu Y."/>
            <person name="Yang F."/>
            <person name="Canniff J."/>
            <person name="Beeson M."/>
            <person name="Gordon L."/>
            <person name="Bennett B."/>
            <person name="Johnson T.E."/>
            <person name="Sikela J.M."/>
        </authorList>
    </citation>
    <scope>NUCLEOTIDE SEQUENCE [MRNA]</scope>
    <source>
        <strain>ILS</strain>
        <strain>ISS</strain>
    </source>
</reference>
<reference key="4">
    <citation type="journal article" date="2005" name="Science">
        <title>The transcriptional landscape of the mammalian genome.</title>
        <authorList>
            <person name="Carninci P."/>
            <person name="Kasukawa T."/>
            <person name="Katayama S."/>
            <person name="Gough J."/>
            <person name="Frith M.C."/>
            <person name="Maeda N."/>
            <person name="Oyama R."/>
            <person name="Ravasi T."/>
            <person name="Lenhard B."/>
            <person name="Wells C."/>
            <person name="Kodzius R."/>
            <person name="Shimokawa K."/>
            <person name="Bajic V.B."/>
            <person name="Brenner S.E."/>
            <person name="Batalov S."/>
            <person name="Forrest A.R."/>
            <person name="Zavolan M."/>
            <person name="Davis M.J."/>
            <person name="Wilming L.G."/>
            <person name="Aidinis V."/>
            <person name="Allen J.E."/>
            <person name="Ambesi-Impiombato A."/>
            <person name="Apweiler R."/>
            <person name="Aturaliya R.N."/>
            <person name="Bailey T.L."/>
            <person name="Bansal M."/>
            <person name="Baxter L."/>
            <person name="Beisel K.W."/>
            <person name="Bersano T."/>
            <person name="Bono H."/>
            <person name="Chalk A.M."/>
            <person name="Chiu K.P."/>
            <person name="Choudhary V."/>
            <person name="Christoffels A."/>
            <person name="Clutterbuck D.R."/>
            <person name="Crowe M.L."/>
            <person name="Dalla E."/>
            <person name="Dalrymple B.P."/>
            <person name="de Bono B."/>
            <person name="Della Gatta G."/>
            <person name="di Bernardo D."/>
            <person name="Down T."/>
            <person name="Engstrom P."/>
            <person name="Fagiolini M."/>
            <person name="Faulkner G."/>
            <person name="Fletcher C.F."/>
            <person name="Fukushima T."/>
            <person name="Furuno M."/>
            <person name="Futaki S."/>
            <person name="Gariboldi M."/>
            <person name="Georgii-Hemming P."/>
            <person name="Gingeras T.R."/>
            <person name="Gojobori T."/>
            <person name="Green R.E."/>
            <person name="Gustincich S."/>
            <person name="Harbers M."/>
            <person name="Hayashi Y."/>
            <person name="Hensch T.K."/>
            <person name="Hirokawa N."/>
            <person name="Hill D."/>
            <person name="Huminiecki L."/>
            <person name="Iacono M."/>
            <person name="Ikeo K."/>
            <person name="Iwama A."/>
            <person name="Ishikawa T."/>
            <person name="Jakt M."/>
            <person name="Kanapin A."/>
            <person name="Katoh M."/>
            <person name="Kawasawa Y."/>
            <person name="Kelso J."/>
            <person name="Kitamura H."/>
            <person name="Kitano H."/>
            <person name="Kollias G."/>
            <person name="Krishnan S.P."/>
            <person name="Kruger A."/>
            <person name="Kummerfeld S.K."/>
            <person name="Kurochkin I.V."/>
            <person name="Lareau L.F."/>
            <person name="Lazarevic D."/>
            <person name="Lipovich L."/>
            <person name="Liu J."/>
            <person name="Liuni S."/>
            <person name="McWilliam S."/>
            <person name="Madan Babu M."/>
            <person name="Madera M."/>
            <person name="Marchionni L."/>
            <person name="Matsuda H."/>
            <person name="Matsuzawa S."/>
            <person name="Miki H."/>
            <person name="Mignone F."/>
            <person name="Miyake S."/>
            <person name="Morris K."/>
            <person name="Mottagui-Tabar S."/>
            <person name="Mulder N."/>
            <person name="Nakano N."/>
            <person name="Nakauchi H."/>
            <person name="Ng P."/>
            <person name="Nilsson R."/>
            <person name="Nishiguchi S."/>
            <person name="Nishikawa S."/>
            <person name="Nori F."/>
            <person name="Ohara O."/>
            <person name="Okazaki Y."/>
            <person name="Orlando V."/>
            <person name="Pang K.C."/>
            <person name="Pavan W.J."/>
            <person name="Pavesi G."/>
            <person name="Pesole G."/>
            <person name="Petrovsky N."/>
            <person name="Piazza S."/>
            <person name="Reed J."/>
            <person name="Reid J.F."/>
            <person name="Ring B.Z."/>
            <person name="Ringwald M."/>
            <person name="Rost B."/>
            <person name="Ruan Y."/>
            <person name="Salzberg S.L."/>
            <person name="Sandelin A."/>
            <person name="Schneider C."/>
            <person name="Schoenbach C."/>
            <person name="Sekiguchi K."/>
            <person name="Semple C.A."/>
            <person name="Seno S."/>
            <person name="Sessa L."/>
            <person name="Sheng Y."/>
            <person name="Shibata Y."/>
            <person name="Shimada H."/>
            <person name="Shimada K."/>
            <person name="Silva D."/>
            <person name="Sinclair B."/>
            <person name="Sperling S."/>
            <person name="Stupka E."/>
            <person name="Sugiura K."/>
            <person name="Sultana R."/>
            <person name="Takenaka Y."/>
            <person name="Taki K."/>
            <person name="Tammoja K."/>
            <person name="Tan S.L."/>
            <person name="Tang S."/>
            <person name="Taylor M.S."/>
            <person name="Tegner J."/>
            <person name="Teichmann S.A."/>
            <person name="Ueda H.R."/>
            <person name="van Nimwegen E."/>
            <person name="Verardo R."/>
            <person name="Wei C.L."/>
            <person name="Yagi K."/>
            <person name="Yamanishi H."/>
            <person name="Zabarovsky E."/>
            <person name="Zhu S."/>
            <person name="Zimmer A."/>
            <person name="Hide W."/>
            <person name="Bult C."/>
            <person name="Grimmond S.M."/>
            <person name="Teasdale R.D."/>
            <person name="Liu E.T."/>
            <person name="Brusic V."/>
            <person name="Quackenbush J."/>
            <person name="Wahlestedt C."/>
            <person name="Mattick J.S."/>
            <person name="Hume D.A."/>
            <person name="Kai C."/>
            <person name="Sasaki D."/>
            <person name="Tomaru Y."/>
            <person name="Fukuda S."/>
            <person name="Kanamori-Katayama M."/>
            <person name="Suzuki M."/>
            <person name="Aoki J."/>
            <person name="Arakawa T."/>
            <person name="Iida J."/>
            <person name="Imamura K."/>
            <person name="Itoh M."/>
            <person name="Kato T."/>
            <person name="Kawaji H."/>
            <person name="Kawagashira N."/>
            <person name="Kawashima T."/>
            <person name="Kojima M."/>
            <person name="Kondo S."/>
            <person name="Konno H."/>
            <person name="Nakano K."/>
            <person name="Ninomiya N."/>
            <person name="Nishio T."/>
            <person name="Okada M."/>
            <person name="Plessy C."/>
            <person name="Shibata K."/>
            <person name="Shiraki T."/>
            <person name="Suzuki S."/>
            <person name="Tagami M."/>
            <person name="Waki K."/>
            <person name="Watahiki A."/>
            <person name="Okamura-Oho Y."/>
            <person name="Suzuki H."/>
            <person name="Kawai J."/>
            <person name="Hayashizaki Y."/>
        </authorList>
    </citation>
    <scope>NUCLEOTIDE SEQUENCE [LARGE SCALE MRNA]</scope>
    <source>
        <strain>C57BL/6J</strain>
        <tissue>Cecum</tissue>
    </source>
</reference>
<reference key="5">
    <citation type="journal article" date="2004" name="Genome Res.">
        <title>The status, quality, and expansion of the NIH full-length cDNA project: the Mammalian Gene Collection (MGC).</title>
        <authorList>
            <consortium name="The MGC Project Team"/>
        </authorList>
    </citation>
    <scope>NUCLEOTIDE SEQUENCE [LARGE SCALE MRNA]</scope>
    <source>
        <strain>FVB/N</strain>
        <tissue>Mammary tumor</tissue>
    </source>
</reference>
<reference key="6">
    <citation type="journal article" date="2000" name="Proc. Natl. Acad. Sci. U.S.A.">
        <title>Serotonin 2B receptor is required for heart development.</title>
        <authorList>
            <person name="Nebigil C.G."/>
            <person name="Choi D.S."/>
            <person name="Dierich A."/>
            <person name="Hickel P."/>
            <person name="Le Meur M."/>
            <person name="Messaddeq N."/>
            <person name="Launay J.M."/>
            <person name="Maroteaux L."/>
        </authorList>
    </citation>
    <scope>DISRUPTION PHENOTYPE</scope>
    <scope>FUNCTION</scope>
    <scope>TISSUE SPECIFICITY</scope>
</reference>
<reference key="7">
    <citation type="journal article" date="2001" name="Circulation">
        <title>Ablation of serotonin 5-HT(2B) receptors in mice leads to abnormal cardiac structure and function.</title>
        <authorList>
            <person name="Nebigil C.G."/>
            <person name="Hickel P."/>
            <person name="Messaddeq N."/>
            <person name="Vonesch J.L."/>
            <person name="Douchet M.P."/>
            <person name="Monassier L."/>
            <person name="Gyorgy K."/>
            <person name="Matz R."/>
            <person name="Andriantsitohaina R."/>
            <person name="Manivet P."/>
            <person name="Launay J.M."/>
            <person name="Maroteaux L."/>
        </authorList>
    </citation>
    <scope>DISRUPTION PHENOTYPE</scope>
    <scope>FUNCTION</scope>
</reference>
<reference key="8">
    <citation type="journal article" date="2002" name="Nat. Med.">
        <title>Function of the serotonin 5-hydroxytryptamine 2B receptor in pulmonary hypertension.</title>
        <authorList>
            <person name="Launay J.M."/>
            <person name="Herve P."/>
            <person name="Peoc'h K."/>
            <person name="Tournois C."/>
            <person name="Callebert J."/>
            <person name="Nebigil C.G."/>
            <person name="Etienne N."/>
            <person name="Drouet L."/>
            <person name="Humbert M."/>
            <person name="Simonneau G."/>
            <person name="Maroteaux L."/>
        </authorList>
    </citation>
    <scope>DISRUPTION PHENOTYPE</scope>
    <scope>FUNCTION</scope>
</reference>
<reference key="9">
    <citation type="journal article" date="2003" name="FASEB J.">
        <title>Serotonin is a novel survival factor of cardiomyocytes: mitochondria as a target of 5-HT2B receptor signaling.</title>
        <authorList>
            <person name="Nebigil C.G."/>
            <person name="Etienne N."/>
            <person name="Messaddeq N."/>
            <person name="Maroteaux L."/>
        </authorList>
    </citation>
    <scope>DISRUPTION PHENOTYPE</scope>
    <scope>FUNCTION</scope>
</reference>
<reference key="10">
    <citation type="journal article" date="2006" name="FASEB J.">
        <title>Serotonin transport and serotonin transporter-mediated antidepressant recognition are controlled by 5-HT2B receptor signaling in serotonergic neuronal cells.</title>
        <authorList>
            <person name="Launay J.M."/>
            <person name="Schneider B."/>
            <person name="Loric S."/>
            <person name="Da Prada M."/>
            <person name="Kellermann O."/>
        </authorList>
    </citation>
    <scope>FUNCTION</scope>
</reference>
<reference key="11">
    <citation type="journal article" date="2007" name="Mol. Pharmacol.">
        <title>Modified receptor internalization upon coexpression of 5-HT1B receptor and 5-HT2B receptors.</title>
        <authorList>
            <person name="Janoshazi A."/>
            <person name="Deraet M."/>
            <person name="Callebert J."/>
            <person name="Setola V."/>
            <person name="Guenther S."/>
            <person name="Saubamea B."/>
            <person name="Manivet P."/>
            <person name="Launay J.M."/>
            <person name="Maroteaux L."/>
        </authorList>
    </citation>
    <scope>FUNCTION</scope>
    <scope>SUBCELLULAR LOCATION</scope>
</reference>
<reference key="12">
    <citation type="journal article" date="2008" name="FASEB J.">
        <title>The serotonin 5-HT2B receptor controls bone mass via osteoblast recruitment and proliferation.</title>
        <authorList>
            <person name="Collet C."/>
            <person name="Schiltz C."/>
            <person name="Geoffroy V."/>
            <person name="Maroteaux L."/>
            <person name="Launay J.M."/>
            <person name="de Vernejoul M.C."/>
        </authorList>
    </citation>
    <scope>DISRUPTION PHENOTYPE</scope>
    <scope>FUNCTION</scope>
    <scope>TISSUE SPECIFICITY</scope>
</reference>
<reference key="13">
    <citation type="journal article" date="2008" name="J. Neurosci.">
        <title>Serotonin 5-HT2B receptors are required for 3,4-methylenedioxymethamphetamine-induced hyperlocomotion and 5-HT release in vivo and in vitro.</title>
        <authorList>
            <person name="Doly S."/>
            <person name="Valjent E."/>
            <person name="Setola V."/>
            <person name="Callebert J."/>
            <person name="Herve D."/>
            <person name="Launay J.M."/>
            <person name="Maroteaux L."/>
        </authorList>
    </citation>
    <scope>DISRUPTION PHENOTYPE</scope>
    <scope>FUNCTION</scope>
    <scope>SUBCELLULAR LOCATION</scope>
    <scope>TISSUE SPECIFICITY</scope>
</reference>
<reference key="14">
    <citation type="journal article" date="2010" name="Nature">
        <title>A population-specific HTR2B stop codon predisposes to severe impulsivity.</title>
        <authorList>
            <person name="Bevilacqua L."/>
            <person name="Doly S."/>
            <person name="Kaprio J."/>
            <person name="Yuan Q."/>
            <person name="Tikkanen R."/>
            <person name="Paunio T."/>
            <person name="Zhou Z."/>
            <person name="Wedenoja J."/>
            <person name="Maroteaux L."/>
            <person name="Diaz S."/>
            <person name="Belmer A."/>
            <person name="Hodgkinson C.A."/>
            <person name="Dell'osso L."/>
            <person name="Suvisaari J."/>
            <person name="Coccaro E."/>
            <person name="Rose R.J."/>
            <person name="Peltonen L."/>
            <person name="Virkkunen M."/>
            <person name="Goldman D."/>
        </authorList>
    </citation>
    <scope>INVOLVEMENT IN IMPULSIVE BEHAVIOR</scope>
    <scope>FUNCTION</scope>
</reference>
<reference key="15">
    <citation type="journal article" date="2010" name="Neurogastroenterol. Motil.">
        <title>Lack of serotonin 5-HT2B receptor alters proliferation and network volume of interstitial cells of Cajal in vivo.</title>
        <authorList>
            <person name="Tharayil V.S."/>
            <person name="Wouters M.M."/>
            <person name="Stanich J.E."/>
            <person name="Roeder J.L."/>
            <person name="Lei S."/>
            <person name="Beyder A."/>
            <person name="Gomez-Pinilla P.J."/>
            <person name="Gershon M.D."/>
            <person name="Maroteaux L."/>
            <person name="Gibbons S.J."/>
            <person name="Farrugia G."/>
        </authorList>
    </citation>
    <scope>DISRUPTION PHENOTYPE</scope>
    <scope>FUNCTION</scope>
    <scope>TISSUE SPECIFICITY</scope>
</reference>
<reference key="16">
    <citation type="journal article" date="2011" name="J. Neurosci.">
        <title>Serotonin receptor 5-HT2B mediates serotonin-induced mechanical hyperalgesia.</title>
        <authorList>
            <person name="Lin S.Y."/>
            <person name="Chang W.J."/>
            <person name="Lin C.S."/>
            <person name="Huang C.Y."/>
            <person name="Wang H.F."/>
            <person name="Sun W.H."/>
        </authorList>
    </citation>
    <scope>TISSUE SPECIFICITY</scope>
    <scope>POSSIBLE FUNCTION IN PAIN PERCEPTION</scope>
</reference>
<reference key="17">
    <citation type="journal article" date="2012" name="Exp. Diabetes Res.">
        <title>5HT(2A) and 5HT(2B) receptors contribute to serotonin-induced vascular dysfunction in diabetes.</title>
        <authorList>
            <person name="Nelson P.M."/>
            <person name="Harrod J.S."/>
            <person name="Lamping K.G."/>
        </authorList>
    </citation>
    <scope>FUNCTION</scope>
</reference>
<evidence type="ECO:0000250" key="1"/>
<evidence type="ECO:0000250" key="2">
    <source>
        <dbReference type="UniProtKB" id="P41595"/>
    </source>
</evidence>
<evidence type="ECO:0000255" key="3"/>
<evidence type="ECO:0000255" key="4">
    <source>
        <dbReference type="PROSITE-ProRule" id="PRU00521"/>
    </source>
</evidence>
<evidence type="ECO:0000269" key="5">
    <source>
    </source>
</evidence>
<evidence type="ECO:0000269" key="6">
    <source>
    </source>
</evidence>
<evidence type="ECO:0000269" key="7">
    <source>
    </source>
</evidence>
<evidence type="ECO:0000269" key="8">
    <source>
    </source>
</evidence>
<evidence type="ECO:0000269" key="9">
    <source>
    </source>
</evidence>
<evidence type="ECO:0000269" key="10">
    <source>
    </source>
</evidence>
<evidence type="ECO:0000269" key="11">
    <source>
    </source>
</evidence>
<evidence type="ECO:0000269" key="12">
    <source>
    </source>
</evidence>
<evidence type="ECO:0000269" key="13">
    <source>
    </source>
</evidence>
<evidence type="ECO:0000269" key="14">
    <source>
    </source>
</evidence>
<evidence type="ECO:0000269" key="15">
    <source>
    </source>
</evidence>
<evidence type="ECO:0000269" key="16">
    <source>
    </source>
</evidence>
<evidence type="ECO:0000269" key="17">
    <source>
    </source>
</evidence>
<evidence type="ECO:0000305" key="18"/>